<accession>Q9M9P0</accession>
<accession>Q93YW9</accession>
<name>EXP13_ARATH</name>
<evidence type="ECO:0000250" key="1"/>
<evidence type="ECO:0000255" key="2"/>
<evidence type="ECO:0000255" key="3">
    <source>
        <dbReference type="PROSITE-ProRule" id="PRU00078"/>
    </source>
</evidence>
<evidence type="ECO:0000255" key="4">
    <source>
        <dbReference type="PROSITE-ProRule" id="PRU00079"/>
    </source>
</evidence>
<evidence type="ECO:0000305" key="5"/>
<keyword id="KW-0134">Cell wall</keyword>
<keyword id="KW-0961">Cell wall biogenesis/degradation</keyword>
<keyword id="KW-0472">Membrane</keyword>
<keyword id="KW-1185">Reference proteome</keyword>
<keyword id="KW-0964">Secreted</keyword>
<keyword id="KW-0732">Signal</keyword>
<feature type="signal peptide" evidence="2">
    <location>
        <begin position="1"/>
        <end position="19"/>
    </location>
</feature>
<feature type="chain" id="PRO_0000008694" description="Expansin-A13">
    <location>
        <begin position="20"/>
        <end position="266"/>
    </location>
</feature>
<feature type="domain" description="Expansin-like EG45" evidence="4">
    <location>
        <begin position="58"/>
        <end position="171"/>
    </location>
</feature>
<feature type="domain" description="Expansin-like CBD" evidence="3">
    <location>
        <begin position="181"/>
        <end position="260"/>
    </location>
</feature>
<reference key="1">
    <citation type="journal article" date="2000" name="Nature">
        <title>Sequence and analysis of chromosome 3 of the plant Arabidopsis thaliana.</title>
        <authorList>
            <person name="Salanoubat M."/>
            <person name="Lemcke K."/>
            <person name="Rieger M."/>
            <person name="Ansorge W."/>
            <person name="Unseld M."/>
            <person name="Fartmann B."/>
            <person name="Valle G."/>
            <person name="Bloecker H."/>
            <person name="Perez-Alonso M."/>
            <person name="Obermaier B."/>
            <person name="Delseny M."/>
            <person name="Boutry M."/>
            <person name="Grivell L.A."/>
            <person name="Mache R."/>
            <person name="Puigdomenech P."/>
            <person name="De Simone V."/>
            <person name="Choisne N."/>
            <person name="Artiguenave F."/>
            <person name="Robert C."/>
            <person name="Brottier P."/>
            <person name="Wincker P."/>
            <person name="Cattolico L."/>
            <person name="Weissenbach J."/>
            <person name="Saurin W."/>
            <person name="Quetier F."/>
            <person name="Schaefer M."/>
            <person name="Mueller-Auer S."/>
            <person name="Gabel C."/>
            <person name="Fuchs M."/>
            <person name="Benes V."/>
            <person name="Wurmbach E."/>
            <person name="Drzonek H."/>
            <person name="Erfle H."/>
            <person name="Jordan N."/>
            <person name="Bangert S."/>
            <person name="Wiedelmann R."/>
            <person name="Kranz H."/>
            <person name="Voss H."/>
            <person name="Holland R."/>
            <person name="Brandt P."/>
            <person name="Nyakatura G."/>
            <person name="Vezzi A."/>
            <person name="D'Angelo M."/>
            <person name="Pallavicini A."/>
            <person name="Toppo S."/>
            <person name="Simionati B."/>
            <person name="Conrad A."/>
            <person name="Hornischer K."/>
            <person name="Kauer G."/>
            <person name="Loehnert T.-H."/>
            <person name="Nordsiek G."/>
            <person name="Reichelt J."/>
            <person name="Scharfe M."/>
            <person name="Schoen O."/>
            <person name="Bargues M."/>
            <person name="Terol J."/>
            <person name="Climent J."/>
            <person name="Navarro P."/>
            <person name="Collado C."/>
            <person name="Perez-Perez A."/>
            <person name="Ottenwaelder B."/>
            <person name="Duchemin D."/>
            <person name="Cooke R."/>
            <person name="Laudie M."/>
            <person name="Berger-Llauro C."/>
            <person name="Purnelle B."/>
            <person name="Masuy D."/>
            <person name="de Haan M."/>
            <person name="Maarse A.C."/>
            <person name="Alcaraz J.-P."/>
            <person name="Cottet A."/>
            <person name="Casacuberta E."/>
            <person name="Monfort A."/>
            <person name="Argiriou A."/>
            <person name="Flores M."/>
            <person name="Liguori R."/>
            <person name="Vitale D."/>
            <person name="Mannhaupt G."/>
            <person name="Haase D."/>
            <person name="Schoof H."/>
            <person name="Rudd S."/>
            <person name="Zaccaria P."/>
            <person name="Mewes H.-W."/>
            <person name="Mayer K.F.X."/>
            <person name="Kaul S."/>
            <person name="Town C.D."/>
            <person name="Koo H.L."/>
            <person name="Tallon L.J."/>
            <person name="Jenkins J."/>
            <person name="Rooney T."/>
            <person name="Rizzo M."/>
            <person name="Walts A."/>
            <person name="Utterback T."/>
            <person name="Fujii C.Y."/>
            <person name="Shea T.P."/>
            <person name="Creasy T.H."/>
            <person name="Haas B."/>
            <person name="Maiti R."/>
            <person name="Wu D."/>
            <person name="Peterson J."/>
            <person name="Van Aken S."/>
            <person name="Pai G."/>
            <person name="Militscher J."/>
            <person name="Sellers P."/>
            <person name="Gill J.E."/>
            <person name="Feldblyum T.V."/>
            <person name="Preuss D."/>
            <person name="Lin X."/>
            <person name="Nierman W.C."/>
            <person name="Salzberg S.L."/>
            <person name="White O."/>
            <person name="Venter J.C."/>
            <person name="Fraser C.M."/>
            <person name="Kaneko T."/>
            <person name="Nakamura Y."/>
            <person name="Sato S."/>
            <person name="Kato T."/>
            <person name="Asamizu E."/>
            <person name="Sasamoto S."/>
            <person name="Kimura T."/>
            <person name="Idesawa K."/>
            <person name="Kawashima K."/>
            <person name="Kishida Y."/>
            <person name="Kiyokawa C."/>
            <person name="Kohara M."/>
            <person name="Matsumoto M."/>
            <person name="Matsuno A."/>
            <person name="Muraki A."/>
            <person name="Nakayama S."/>
            <person name="Nakazaki N."/>
            <person name="Shinpo S."/>
            <person name="Takeuchi C."/>
            <person name="Wada T."/>
            <person name="Watanabe A."/>
            <person name="Yamada M."/>
            <person name="Yasuda M."/>
            <person name="Tabata S."/>
        </authorList>
    </citation>
    <scope>NUCLEOTIDE SEQUENCE [LARGE SCALE GENOMIC DNA]</scope>
    <source>
        <strain>cv. Columbia</strain>
    </source>
</reference>
<reference key="2">
    <citation type="journal article" date="2017" name="Plant J.">
        <title>Araport11: a complete reannotation of the Arabidopsis thaliana reference genome.</title>
        <authorList>
            <person name="Cheng C.Y."/>
            <person name="Krishnakumar V."/>
            <person name="Chan A.P."/>
            <person name="Thibaud-Nissen F."/>
            <person name="Schobel S."/>
            <person name="Town C.D."/>
        </authorList>
    </citation>
    <scope>GENOME REANNOTATION</scope>
    <source>
        <strain>cv. Columbia</strain>
    </source>
</reference>
<reference key="3">
    <citation type="journal article" date="2003" name="Science">
        <title>Empirical analysis of transcriptional activity in the Arabidopsis genome.</title>
        <authorList>
            <person name="Yamada K."/>
            <person name="Lim J."/>
            <person name="Dale J.M."/>
            <person name="Chen H."/>
            <person name="Shinn P."/>
            <person name="Palm C.J."/>
            <person name="Southwick A.M."/>
            <person name="Wu H.C."/>
            <person name="Kim C.J."/>
            <person name="Nguyen M."/>
            <person name="Pham P.K."/>
            <person name="Cheuk R.F."/>
            <person name="Karlin-Newmann G."/>
            <person name="Liu S.X."/>
            <person name="Lam B."/>
            <person name="Sakano H."/>
            <person name="Wu T."/>
            <person name="Yu G."/>
            <person name="Miranda M."/>
            <person name="Quach H.L."/>
            <person name="Tripp M."/>
            <person name="Chang C.H."/>
            <person name="Lee J.M."/>
            <person name="Toriumi M.J."/>
            <person name="Chan M.M."/>
            <person name="Tang C.C."/>
            <person name="Onodera C.S."/>
            <person name="Deng J.M."/>
            <person name="Akiyama K."/>
            <person name="Ansari Y."/>
            <person name="Arakawa T."/>
            <person name="Banh J."/>
            <person name="Banno F."/>
            <person name="Bowser L."/>
            <person name="Brooks S.Y."/>
            <person name="Carninci P."/>
            <person name="Chao Q."/>
            <person name="Choy N."/>
            <person name="Enju A."/>
            <person name="Goldsmith A.D."/>
            <person name="Gurjal M."/>
            <person name="Hansen N.F."/>
            <person name="Hayashizaki Y."/>
            <person name="Johnson-Hopson C."/>
            <person name="Hsuan V.W."/>
            <person name="Iida K."/>
            <person name="Karnes M."/>
            <person name="Khan S."/>
            <person name="Koesema E."/>
            <person name="Ishida J."/>
            <person name="Jiang P.X."/>
            <person name="Jones T."/>
            <person name="Kawai J."/>
            <person name="Kamiya A."/>
            <person name="Meyers C."/>
            <person name="Nakajima M."/>
            <person name="Narusaka M."/>
            <person name="Seki M."/>
            <person name="Sakurai T."/>
            <person name="Satou M."/>
            <person name="Tamse R."/>
            <person name="Vaysberg M."/>
            <person name="Wallender E.K."/>
            <person name="Wong C."/>
            <person name="Yamamura Y."/>
            <person name="Yuan S."/>
            <person name="Shinozaki K."/>
            <person name="Davis R.W."/>
            <person name="Theologis A."/>
            <person name="Ecker J.R."/>
        </authorList>
    </citation>
    <scope>NUCLEOTIDE SEQUENCE [LARGE SCALE MRNA]</scope>
    <source>
        <strain>cv. Columbia</strain>
    </source>
</reference>
<reference key="4">
    <citation type="journal article" date="2004" name="Plant Mol. Biol.">
        <title>Nomenclature for members of the expansin superfamily of genes and proteins.</title>
        <authorList>
            <person name="Kende H."/>
            <person name="Bradford K.J."/>
            <person name="Brummell D.A."/>
            <person name="Cho H.-T."/>
            <person name="Cosgrove D.J."/>
            <person name="Fleming A.J."/>
            <person name="Gehring C."/>
            <person name="Lee Y."/>
            <person name="McQueen-Mason S.J."/>
            <person name="Rose J.K.C."/>
            <person name="Voesenek L.A.C."/>
        </authorList>
    </citation>
    <scope>NOMENCLATURE</scope>
</reference>
<gene>
    <name type="primary">EXPA13</name>
    <name type="synonym">EXP13</name>
    <name type="ordered locus">At3g03220</name>
    <name type="ORF">T17B22.9</name>
</gene>
<organism>
    <name type="scientific">Arabidopsis thaliana</name>
    <name type="common">Mouse-ear cress</name>
    <dbReference type="NCBI Taxonomy" id="3702"/>
    <lineage>
        <taxon>Eukaryota</taxon>
        <taxon>Viridiplantae</taxon>
        <taxon>Streptophyta</taxon>
        <taxon>Embryophyta</taxon>
        <taxon>Tracheophyta</taxon>
        <taxon>Spermatophyta</taxon>
        <taxon>Magnoliopsida</taxon>
        <taxon>eudicotyledons</taxon>
        <taxon>Gunneridae</taxon>
        <taxon>Pentapetalae</taxon>
        <taxon>rosids</taxon>
        <taxon>malvids</taxon>
        <taxon>Brassicales</taxon>
        <taxon>Brassicaceae</taxon>
        <taxon>Camelineae</taxon>
        <taxon>Arabidopsis</taxon>
    </lineage>
</organism>
<proteinExistence type="evidence at transcript level"/>
<protein>
    <recommendedName>
        <fullName>Expansin-A13</fullName>
        <shortName>AtEXPA13</shortName>
    </recommendedName>
    <alternativeName>
        <fullName>Alpha-expansin-13</fullName>
        <shortName>At-EXP13</shortName>
        <shortName>AtEx13</shortName>
    </alternativeName>
    <alternativeName>
        <fullName>Ath-ExpAlpha-1.22</fullName>
    </alternativeName>
</protein>
<comment type="function">
    <text evidence="1">Causes loosening and extension of plant cell walls by disrupting non-covalent bonding between cellulose microfibrils and matrix glucans. No enzymatic activity has been found (By similarity).</text>
</comment>
<comment type="subcellular location">
    <subcellularLocation>
        <location>Secreted</location>
        <location>Cell wall</location>
    </subcellularLocation>
    <subcellularLocation>
        <location>Membrane</location>
        <topology>Peripheral membrane protein</topology>
    </subcellularLocation>
</comment>
<comment type="similarity">
    <text evidence="5">Belongs to the expansin family. Expansin A subfamily.</text>
</comment>
<comment type="sequence caution" evidence="5">
    <conflict type="erroneous gene model prediction">
        <sequence resource="EMBL-CDS" id="AAF26104"/>
    </conflict>
</comment>
<comment type="online information" name="EXPANSIN homepage">
    <link uri="https://www.dept.psu.edu/biology/groups/expansins/index.htm"/>
</comment>
<sequence>MQRFLLPLLFLALSPPAICHYSSSTSSPSSSSVSSDASEWRPARATYYAATNPRDAVGGACGYGDLVKSGYGMATVGLSETLFERGQICGACFELRCVDDLRWCIPGTSIILTATNFCAPNYGFDPDGGGHCNPPNKHFVLPIEAFEKIAIWKAGNMPVQYRRINCRKEGSMRFTVDGGGIFISVLITNVAGSGDIAAVKIKGSRTGWLPMGRNWGQNWHINADLRNQALSFEVTSSDRSTVTSYNVSPKNWNYGQTFEGKQFETP</sequence>
<dbReference type="EMBL" id="AC012328">
    <property type="protein sequence ID" value="AAF26104.1"/>
    <property type="status" value="ALT_SEQ"/>
    <property type="molecule type" value="Genomic_DNA"/>
</dbReference>
<dbReference type="EMBL" id="CP002686">
    <property type="protein sequence ID" value="AEE73914.1"/>
    <property type="molecule type" value="Genomic_DNA"/>
</dbReference>
<dbReference type="EMBL" id="AY059732">
    <property type="protein sequence ID" value="AAL24089.1"/>
    <property type="molecule type" value="mRNA"/>
</dbReference>
<dbReference type="EMBL" id="AY113990">
    <property type="protein sequence ID" value="AAM45038.1"/>
    <property type="molecule type" value="mRNA"/>
</dbReference>
<dbReference type="RefSeq" id="NP_566197.1">
    <property type="nucleotide sequence ID" value="NM_111192.3"/>
</dbReference>
<dbReference type="SMR" id="Q9M9P0"/>
<dbReference type="FunCoup" id="Q9M9P0">
    <property type="interactions" value="68"/>
</dbReference>
<dbReference type="STRING" id="3702.Q9M9P0"/>
<dbReference type="PaxDb" id="3702-AT3G03220.1"/>
<dbReference type="ProteomicsDB" id="222240"/>
<dbReference type="EnsemblPlants" id="AT3G03220.1">
    <property type="protein sequence ID" value="AT3G03220.1"/>
    <property type="gene ID" value="AT3G03220"/>
</dbReference>
<dbReference type="GeneID" id="821224"/>
<dbReference type="Gramene" id="AT3G03220.1">
    <property type="protein sequence ID" value="AT3G03220.1"/>
    <property type="gene ID" value="AT3G03220"/>
</dbReference>
<dbReference type="KEGG" id="ath:AT3G03220"/>
<dbReference type="Araport" id="AT3G03220"/>
<dbReference type="TAIR" id="AT3G03220">
    <property type="gene designation" value="EXPA13"/>
</dbReference>
<dbReference type="eggNOG" id="ENOG502QVFR">
    <property type="taxonomic scope" value="Eukaryota"/>
</dbReference>
<dbReference type="HOGENOM" id="CLU_027462_0_1_1"/>
<dbReference type="InParanoid" id="Q9M9P0"/>
<dbReference type="OMA" id="VEDPLYC"/>
<dbReference type="OrthoDB" id="5823761at2759"/>
<dbReference type="PhylomeDB" id="Q9M9P0"/>
<dbReference type="PRO" id="PR:Q9M9P0"/>
<dbReference type="Proteomes" id="UP000006548">
    <property type="component" value="Chromosome 3"/>
</dbReference>
<dbReference type="ExpressionAtlas" id="Q9M9P0">
    <property type="expression patterns" value="baseline and differential"/>
</dbReference>
<dbReference type="GO" id="GO:0005576">
    <property type="term" value="C:extracellular region"/>
    <property type="evidence" value="ECO:0007669"/>
    <property type="project" value="UniProtKB-KW"/>
</dbReference>
<dbReference type="GO" id="GO:0016020">
    <property type="term" value="C:membrane"/>
    <property type="evidence" value="ECO:0007669"/>
    <property type="project" value="UniProtKB-SubCell"/>
</dbReference>
<dbReference type="GO" id="GO:0009653">
    <property type="term" value="P:anatomical structure morphogenesis"/>
    <property type="evidence" value="ECO:0007669"/>
    <property type="project" value="UniProtKB-ARBA"/>
</dbReference>
<dbReference type="GO" id="GO:0009828">
    <property type="term" value="P:plant-type cell wall loosening"/>
    <property type="evidence" value="ECO:0000250"/>
    <property type="project" value="UniProtKB"/>
</dbReference>
<dbReference type="CDD" id="cd22274">
    <property type="entry name" value="DPBB_EXPA_N"/>
    <property type="match status" value="1"/>
</dbReference>
<dbReference type="Gene3D" id="2.60.40.760">
    <property type="entry name" value="Expansin, cellulose-binding-like domain"/>
    <property type="match status" value="1"/>
</dbReference>
<dbReference type="Gene3D" id="2.40.40.10">
    <property type="entry name" value="RlpA-like domain"/>
    <property type="match status" value="1"/>
</dbReference>
<dbReference type="InterPro" id="IPR007118">
    <property type="entry name" value="Expan_Lol_pI"/>
</dbReference>
<dbReference type="InterPro" id="IPR002963">
    <property type="entry name" value="Expansin"/>
</dbReference>
<dbReference type="InterPro" id="IPR007112">
    <property type="entry name" value="Expansin/allergen_DPBB_dom"/>
</dbReference>
<dbReference type="InterPro" id="IPR007117">
    <property type="entry name" value="Expansin_CBD"/>
</dbReference>
<dbReference type="InterPro" id="IPR036749">
    <property type="entry name" value="Expansin_CBD_sf"/>
</dbReference>
<dbReference type="InterPro" id="IPR009009">
    <property type="entry name" value="RlpA-like_DPBB"/>
</dbReference>
<dbReference type="InterPro" id="IPR036908">
    <property type="entry name" value="RlpA-like_sf"/>
</dbReference>
<dbReference type="PANTHER" id="PTHR31867">
    <property type="entry name" value="EXPANSIN-A15"/>
    <property type="match status" value="1"/>
</dbReference>
<dbReference type="Pfam" id="PF03330">
    <property type="entry name" value="DPBB_1"/>
    <property type="match status" value="1"/>
</dbReference>
<dbReference type="Pfam" id="PF01357">
    <property type="entry name" value="Expansin_C"/>
    <property type="match status" value="1"/>
</dbReference>
<dbReference type="PRINTS" id="PR01226">
    <property type="entry name" value="EXPANSIN"/>
</dbReference>
<dbReference type="PRINTS" id="PR01225">
    <property type="entry name" value="EXPANSNFAMLY"/>
</dbReference>
<dbReference type="SMART" id="SM00837">
    <property type="entry name" value="DPBB_1"/>
    <property type="match status" value="1"/>
</dbReference>
<dbReference type="SUPFAM" id="SSF50685">
    <property type="entry name" value="Barwin-like endoglucanases"/>
    <property type="match status" value="1"/>
</dbReference>
<dbReference type="SUPFAM" id="SSF49590">
    <property type="entry name" value="PHL pollen allergen"/>
    <property type="match status" value="1"/>
</dbReference>
<dbReference type="PROSITE" id="PS50843">
    <property type="entry name" value="EXPANSIN_CBD"/>
    <property type="match status" value="1"/>
</dbReference>
<dbReference type="PROSITE" id="PS50842">
    <property type="entry name" value="EXPANSIN_EG45"/>
    <property type="match status" value="1"/>
</dbReference>